<protein>
    <recommendedName>
        <fullName>AP-2 complex subunit sigma</fullName>
    </recommendedName>
    <alternativeName>
        <fullName>Adaptor protein complex AP-2 subunit sigma</fullName>
    </alternativeName>
    <alternativeName>
        <fullName>Adaptor-related protein complex 2 subunit sigma</fullName>
    </alternativeName>
    <alternativeName>
        <fullName>Clathrin assembly protein 2 sigma small chain</fullName>
    </alternativeName>
    <alternativeName>
        <fullName>Clathrin coat assembly protein AP17</fullName>
    </alternativeName>
    <alternativeName>
        <fullName>Clathrin coat-associated protein AP17</fullName>
    </alternativeName>
    <alternativeName>
        <fullName>Plasma membrane adaptor AP-2 17 kDa protein</fullName>
    </alternativeName>
    <alternativeName>
        <fullName>Sigma-adaptin 3b</fullName>
    </alternativeName>
    <alternativeName>
        <fullName>Sigma2-adaptin</fullName>
    </alternativeName>
</protein>
<organism>
    <name type="scientific">Rattus norvegicus</name>
    <name type="common">Rat</name>
    <dbReference type="NCBI Taxonomy" id="10116"/>
    <lineage>
        <taxon>Eukaryota</taxon>
        <taxon>Metazoa</taxon>
        <taxon>Chordata</taxon>
        <taxon>Craniata</taxon>
        <taxon>Vertebrata</taxon>
        <taxon>Euteleostomi</taxon>
        <taxon>Mammalia</taxon>
        <taxon>Eutheria</taxon>
        <taxon>Euarchontoglires</taxon>
        <taxon>Glires</taxon>
        <taxon>Rodentia</taxon>
        <taxon>Myomorpha</taxon>
        <taxon>Muroidea</taxon>
        <taxon>Muridae</taxon>
        <taxon>Murinae</taxon>
        <taxon>Rattus</taxon>
    </lineage>
</organism>
<name>AP2S1_RAT</name>
<gene>
    <name type="primary">Ap2s1</name>
    <name type="synonym">Ap17</name>
    <name type="synonym">Claps2</name>
</gene>
<sequence length="142" mass="17018">MIRFILIQNRAGKTRLAKWYMQFDDDEKQKLIEEVHAVVTVRDAKHTNFVEFRNFKIIYRRYAGLYFCICVDVNDNNLAYLEAIHNFVEVLNEYFHNVCELDLVFNFYKVYTVVDEMFLAGEIRETSQTKVLKQLLMLQSLE</sequence>
<dbReference type="EMBL" id="M37194">
    <property type="protein sequence ID" value="AAA40742.1"/>
    <property type="molecule type" value="mRNA"/>
</dbReference>
<dbReference type="EMBL" id="U75917">
    <property type="protein sequence ID" value="AAB46980.1"/>
    <property type="molecule type" value="mRNA"/>
</dbReference>
<dbReference type="EMBL" id="BC088138">
    <property type="protein sequence ID" value="AAH88138.1"/>
    <property type="molecule type" value="mRNA"/>
</dbReference>
<dbReference type="PIR" id="B40535">
    <property type="entry name" value="B40535"/>
</dbReference>
<dbReference type="RefSeq" id="NP_075241.2">
    <property type="nucleotide sequence ID" value="NM_022952.2"/>
</dbReference>
<dbReference type="PDB" id="4NEE">
    <property type="method" value="X-ray"/>
    <property type="resolution" value="2.88 A"/>
    <property type="chains" value="D/F/I/L=1-142"/>
</dbReference>
<dbReference type="PDB" id="6OWO">
    <property type="method" value="EM"/>
    <property type="resolution" value="3.20 A"/>
    <property type="chains" value="S=1-142"/>
</dbReference>
<dbReference type="PDB" id="6OWT">
    <property type="method" value="EM"/>
    <property type="resolution" value="3.80 A"/>
    <property type="chains" value="S=1-142"/>
</dbReference>
<dbReference type="PDB" id="6OXL">
    <property type="method" value="EM"/>
    <property type="resolution" value="3.50 A"/>
    <property type="chains" value="S=1-142"/>
</dbReference>
<dbReference type="PDBsum" id="4NEE"/>
<dbReference type="PDBsum" id="6OWO"/>
<dbReference type="PDBsum" id="6OWT"/>
<dbReference type="PDBsum" id="6OXL"/>
<dbReference type="EMDB" id="EMD-16803"/>
<dbReference type="EMDB" id="EMD-16804"/>
<dbReference type="EMDB" id="EMD-20215"/>
<dbReference type="EMDB" id="EMD-20217"/>
<dbReference type="EMDB" id="EMD-20220"/>
<dbReference type="EMDB" id="EMD-29977"/>
<dbReference type="SMR" id="P62744"/>
<dbReference type="BioGRID" id="249239">
    <property type="interactions" value="1"/>
</dbReference>
<dbReference type="FunCoup" id="P62744">
    <property type="interactions" value="2961"/>
</dbReference>
<dbReference type="IntAct" id="P62744">
    <property type="interactions" value="5"/>
</dbReference>
<dbReference type="MINT" id="P62744"/>
<dbReference type="STRING" id="10116.ENSRNOP00000021310"/>
<dbReference type="BindingDB" id="P62744"/>
<dbReference type="ChEMBL" id="CHEMBL1697667"/>
<dbReference type="DrugCentral" id="P62744"/>
<dbReference type="iPTMnet" id="P62744"/>
<dbReference type="PhosphoSitePlus" id="P62744"/>
<dbReference type="jPOST" id="P62744"/>
<dbReference type="PaxDb" id="10116-ENSRNOP00000021310"/>
<dbReference type="Ensembl" id="ENSRNOT00000119694.1">
    <property type="protein sequence ID" value="ENSRNOP00000083093.1"/>
    <property type="gene ID" value="ENSRNOG00000015865.6"/>
</dbReference>
<dbReference type="GeneID" id="65046"/>
<dbReference type="KEGG" id="rno:65046"/>
<dbReference type="UCSC" id="RGD:620188">
    <property type="organism name" value="rat"/>
</dbReference>
<dbReference type="AGR" id="RGD:620188"/>
<dbReference type="CTD" id="1175"/>
<dbReference type="RGD" id="620188">
    <property type="gene designation" value="Ap2s1"/>
</dbReference>
<dbReference type="eggNOG" id="KOG0935">
    <property type="taxonomic scope" value="Eukaryota"/>
</dbReference>
<dbReference type="GeneTree" id="ENSGT00970000193421"/>
<dbReference type="HOGENOM" id="CLU_061221_3_1_1"/>
<dbReference type="InParanoid" id="P62744"/>
<dbReference type="OrthoDB" id="371463at2759"/>
<dbReference type="PhylomeDB" id="P62744"/>
<dbReference type="TreeFam" id="TF300139"/>
<dbReference type="Reactome" id="R-RNO-177504">
    <property type="pathway name" value="Retrograde neurotrophin signalling"/>
</dbReference>
<dbReference type="Reactome" id="R-RNO-2132295">
    <property type="pathway name" value="MHC class II antigen presentation"/>
</dbReference>
<dbReference type="Reactome" id="R-RNO-416993">
    <property type="pathway name" value="Trafficking of GluR2-containing AMPA receptors"/>
</dbReference>
<dbReference type="Reactome" id="R-RNO-437239">
    <property type="pathway name" value="Recycling pathway of L1"/>
</dbReference>
<dbReference type="Reactome" id="R-RNO-5099900">
    <property type="pathway name" value="WNT5A-dependent internalization of FZD4"/>
</dbReference>
<dbReference type="Reactome" id="R-RNO-5140745">
    <property type="pathway name" value="WNT5A-dependent internalization of FZD2, FZD5 and ROR2"/>
</dbReference>
<dbReference type="Reactome" id="R-RNO-8856825">
    <property type="pathway name" value="Cargo recognition for clathrin-mediated endocytosis"/>
</dbReference>
<dbReference type="Reactome" id="R-RNO-8856828">
    <property type="pathway name" value="Clathrin-mediated endocytosis"/>
</dbReference>
<dbReference type="Reactome" id="R-RNO-8866427">
    <property type="pathway name" value="VLDLR internalisation and degradation"/>
</dbReference>
<dbReference type="Reactome" id="R-RNO-8964038">
    <property type="pathway name" value="LDL clearance"/>
</dbReference>
<dbReference type="EvolutionaryTrace" id="P62744"/>
<dbReference type="PRO" id="PR:P62744"/>
<dbReference type="Proteomes" id="UP000002494">
    <property type="component" value="Chromosome 1"/>
</dbReference>
<dbReference type="Bgee" id="ENSRNOG00000015865">
    <property type="expression patterns" value="Expressed in frontal cortex and 20 other cell types or tissues"/>
</dbReference>
<dbReference type="GO" id="GO:0030122">
    <property type="term" value="C:AP-2 adaptor complex"/>
    <property type="evidence" value="ECO:0000314"/>
    <property type="project" value="MGI"/>
</dbReference>
<dbReference type="GO" id="GO:0098894">
    <property type="term" value="C:extrinsic component of presynaptic endocytic zone membrane"/>
    <property type="evidence" value="ECO:0000314"/>
    <property type="project" value="SynGO"/>
</dbReference>
<dbReference type="GO" id="GO:0098978">
    <property type="term" value="C:glutamatergic synapse"/>
    <property type="evidence" value="ECO:0000314"/>
    <property type="project" value="SynGO"/>
</dbReference>
<dbReference type="GO" id="GO:0043231">
    <property type="term" value="C:intracellular membrane-bounded organelle"/>
    <property type="evidence" value="ECO:0000318"/>
    <property type="project" value="GO_Central"/>
</dbReference>
<dbReference type="GO" id="GO:0005886">
    <property type="term" value="C:plasma membrane"/>
    <property type="evidence" value="ECO:0000304"/>
    <property type="project" value="Reactome"/>
</dbReference>
<dbReference type="GO" id="GO:0098794">
    <property type="term" value="C:postsynapse"/>
    <property type="evidence" value="ECO:0007669"/>
    <property type="project" value="GOC"/>
</dbReference>
<dbReference type="GO" id="GO:0045202">
    <property type="term" value="C:synapse"/>
    <property type="evidence" value="ECO:0000266"/>
    <property type="project" value="RGD"/>
</dbReference>
<dbReference type="GO" id="GO:0008021">
    <property type="term" value="C:synaptic vesicle"/>
    <property type="evidence" value="ECO:0000314"/>
    <property type="project" value="SynGO"/>
</dbReference>
<dbReference type="GO" id="GO:0035615">
    <property type="term" value="F:clathrin adaptor activity"/>
    <property type="evidence" value="ECO:0007669"/>
    <property type="project" value="InterPro"/>
</dbReference>
<dbReference type="GO" id="GO:0072583">
    <property type="term" value="P:clathrin-dependent endocytosis"/>
    <property type="evidence" value="ECO:0007669"/>
    <property type="project" value="InterPro"/>
</dbReference>
<dbReference type="GO" id="GO:0006886">
    <property type="term" value="P:intracellular protein transport"/>
    <property type="evidence" value="ECO:0007669"/>
    <property type="project" value="InterPro"/>
</dbReference>
<dbReference type="GO" id="GO:0098884">
    <property type="term" value="P:postsynaptic neurotransmitter receptor internalization"/>
    <property type="evidence" value="ECO:0000314"/>
    <property type="project" value="SynGO"/>
</dbReference>
<dbReference type="GO" id="GO:0048488">
    <property type="term" value="P:synaptic vesicle endocytosis"/>
    <property type="evidence" value="ECO:0000266"/>
    <property type="project" value="RGD"/>
</dbReference>
<dbReference type="GO" id="GO:0016192">
    <property type="term" value="P:vesicle-mediated transport"/>
    <property type="evidence" value="ECO:0000318"/>
    <property type="project" value="GO_Central"/>
</dbReference>
<dbReference type="CDD" id="cd14833">
    <property type="entry name" value="AP2_sigma"/>
    <property type="match status" value="1"/>
</dbReference>
<dbReference type="FunFam" id="3.30.450.60:FF:000004">
    <property type="entry name" value="AP complex subunit sigma"/>
    <property type="match status" value="1"/>
</dbReference>
<dbReference type="Gene3D" id="3.30.450.60">
    <property type="match status" value="1"/>
</dbReference>
<dbReference type="IDEAL" id="IID50215"/>
<dbReference type="InterPro" id="IPR016635">
    <property type="entry name" value="AP_complex_ssu"/>
</dbReference>
<dbReference type="InterPro" id="IPR022775">
    <property type="entry name" value="AP_mu_sigma_su"/>
</dbReference>
<dbReference type="InterPro" id="IPR027156">
    <property type="entry name" value="APS2"/>
</dbReference>
<dbReference type="InterPro" id="IPR000804">
    <property type="entry name" value="Clathrin_sm-chain_CS"/>
</dbReference>
<dbReference type="InterPro" id="IPR011012">
    <property type="entry name" value="Longin-like_dom_sf"/>
</dbReference>
<dbReference type="PANTHER" id="PTHR11753">
    <property type="entry name" value="ADAPTOR COMPLEXES SMALL SUBUNIT FAMILY"/>
    <property type="match status" value="1"/>
</dbReference>
<dbReference type="Pfam" id="PF01217">
    <property type="entry name" value="Clat_adaptor_s"/>
    <property type="match status" value="1"/>
</dbReference>
<dbReference type="PIRSF" id="PIRSF015588">
    <property type="entry name" value="AP_complex_sigma"/>
    <property type="match status" value="1"/>
</dbReference>
<dbReference type="SUPFAM" id="SSF64356">
    <property type="entry name" value="SNARE-like"/>
    <property type="match status" value="1"/>
</dbReference>
<dbReference type="PROSITE" id="PS00989">
    <property type="entry name" value="CLAT_ADAPTOR_S"/>
    <property type="match status" value="1"/>
</dbReference>
<feature type="chain" id="PRO_0000193807" description="AP-2 complex subunit sigma">
    <location>
        <begin position="1"/>
        <end position="142"/>
    </location>
</feature>
<feature type="modified residue" description="Phosphoserine" evidence="2">
    <location>
        <position position="140"/>
    </location>
</feature>
<feature type="sequence conflict" description="In Ref. 2; AAB46980." evidence="6" ref="2">
    <original>A</original>
    <variation>G</variation>
    <location>
        <position position="83"/>
    </location>
</feature>
<feature type="sequence conflict" description="In Ref. 2; AAB46980." evidence="6" ref="2">
    <original>KV</original>
    <variation>RF</variation>
    <location>
        <begin position="109"/>
        <end position="110"/>
    </location>
</feature>
<feature type="sequence conflict" description="In Ref. 2; AAB46980." evidence="6" ref="2">
    <original>M</original>
    <variation>I</variation>
    <location>
        <position position="117"/>
    </location>
</feature>
<feature type="sequence conflict" description="In Ref. 2; AAB46980." evidence="6" ref="2">
    <original>T</original>
    <variation>R</variation>
    <location>
        <position position="126"/>
    </location>
</feature>
<feature type="strand" evidence="7">
    <location>
        <begin position="2"/>
        <end position="9"/>
    </location>
</feature>
<feature type="strand" evidence="7">
    <location>
        <begin position="14"/>
        <end position="21"/>
    </location>
</feature>
<feature type="helix" evidence="7">
    <location>
        <begin position="25"/>
        <end position="41"/>
    </location>
</feature>
<feature type="strand" evidence="7">
    <location>
        <begin position="44"/>
        <end position="46"/>
    </location>
</feature>
<feature type="strand" evidence="7">
    <location>
        <begin position="48"/>
        <end position="51"/>
    </location>
</feature>
<feature type="strand" evidence="7">
    <location>
        <begin position="53"/>
        <end position="62"/>
    </location>
</feature>
<feature type="strand" evidence="7">
    <location>
        <begin position="65"/>
        <end position="72"/>
    </location>
</feature>
<feature type="helix" evidence="7">
    <location>
        <begin position="77"/>
        <end position="95"/>
    </location>
</feature>
<feature type="helix" evidence="7">
    <location>
        <begin position="100"/>
        <end position="105"/>
    </location>
</feature>
<feature type="helix" evidence="7">
    <location>
        <begin position="107"/>
        <end position="117"/>
    </location>
</feature>
<feature type="helix" evidence="7">
    <location>
        <begin position="128"/>
        <end position="140"/>
    </location>
</feature>
<reference key="1">
    <citation type="journal article" date="1991" name="J. Biol. Chem.">
        <title>AP17 and AP19, the mammalian small chains of the clathrin-associated protein complexes show homology to Yap17p, their putative homolog in yeast.</title>
        <authorList>
            <person name="Kirchhausen T."/>
            <person name="Davis A.C."/>
            <person name="Frucht S."/>
            <person name="O'Brine Greco B."/>
            <person name="Payne G.S."/>
            <person name="Tubb B."/>
        </authorList>
    </citation>
    <scope>NUCLEOTIDE SEQUENCE [MRNA]</scope>
    <source>
        <tissue>Brain</tissue>
    </source>
</reference>
<reference key="2">
    <citation type="journal article" date="1999" name="Arterioscler. Thromb. Vasc. Biol.">
        <title>A systematic analysis of 40 random genes in cultured vascular smooth muscle subtypes reveals a heterogeneity of gene expression and identifies the tight junction gene zonula occludens 2 as a marker of epithelioid 'pup' smooth muscle cells and a participant in carotid neointimal formation.</title>
        <authorList>
            <person name="Adams L.D."/>
            <person name="Lemire J.M."/>
            <person name="Schwartz S.M."/>
        </authorList>
    </citation>
    <scope>NUCLEOTIDE SEQUENCE [MRNA]</scope>
    <source>
        <strain>Wistar Kyoto</strain>
    </source>
</reference>
<reference key="3">
    <citation type="journal article" date="2004" name="Genome Res.">
        <title>The status, quality, and expansion of the NIH full-length cDNA project: the Mammalian Gene Collection (MGC).</title>
        <authorList>
            <consortium name="The MGC Project Team"/>
        </authorList>
    </citation>
    <scope>NUCLEOTIDE SEQUENCE [LARGE SCALE MRNA]</scope>
    <source>
        <tissue>Spleen</tissue>
    </source>
</reference>
<reference key="4">
    <citation type="journal article" date="2003" name="Cell Struct. Funct.">
        <title>Adaptor protein complexes as the key regulators of protein sorting in the post-Golgi network.</title>
        <authorList>
            <person name="Nakatsu F."/>
            <person name="Ohno H."/>
        </authorList>
    </citation>
    <scope>FUNCTION OF THE AP-2 COMPLEX IN CLATHRIN-MEDIATED ENDOCYTOSIS</scope>
</reference>
<reference key="5">
    <citation type="journal article" date="2004" name="Annu. Rev. Cell Dev. Biol.">
        <title>Adaptors for clathrin coats: structure and function.</title>
        <authorList>
            <person name="Owen D.J."/>
            <person name="Collins B.M."/>
            <person name="Evans P.R."/>
        </authorList>
    </citation>
    <scope>FUNCTION OF THE AP-2 COMPLEX IN CLATHRIN-MEDIATED ENDOCYTOSIS</scope>
</reference>
<proteinExistence type="evidence at protein level"/>
<comment type="function">
    <text evidence="1 4 5">Component of the adaptor protein complex 2 (AP-2). Adaptor protein complexes function in protein Transport via Transport vesicles in different membrane traffic pathways. Adaptor protein complexes are vesicle coat components and appear to be involved in cargo selection and vesicle formation. AP-2 is involved in clathrin-dependent endocytosis in which cargo proteins are incorporated into vesicles surrounded by clathrin (clathrin-coated vesicles, CCVs) which are destined for fusion with the early endosome. The clathrin lattice serves as a mechanical scaffold but is itself unable to bind directly to membrane components. Clathrin-associated adaptor protein (AP) complexes which can bind directly to both the clathrin lattice and to the lipid and protein components of membranes are considered to be the major clathrin adaptors contributing the CCV formation. AP-2 also serves as a cargo receptor to selectively sort the membrane proteins involved in receptor-mediated endocytosis. AP-2 seems to play a role in the recycling of synaptic vesicle membranes from the presynaptic surface. AP-2 recognizes Y-X-X-[FILMV] (Y-X-X-Phi) and [ED]-X-X-X-L-[LI] endocytosis signal motifs within the cytosolic tails of transmembrane cargo molecules. AP-2 may also play a role in maintaining normal post-endocytic trafficking through the ARF6-regulated, non-clathrin pathway. The AP-2 alpha and AP-2 sigma subunits are thought to contribute to the recognition of the [ED]-X-X-X-L-[LI] motif. May also play a role in extracellular calcium homeostasis (By similarity).</text>
</comment>
<comment type="subunit">
    <text evidence="2">Adaptor protein complex 2 (AP-2) is a heterotetramer composed of two large adaptins (alpha-type subunit AP2A1 or AP2A2 and beta-type subunit AP2B1), a medium adaptin (mu-type subunit AP2M1) and a small adaptin (sigma-type subunit AP2S1). Interacts with CCDC32; the interaction is direct and mediates association of CCDC32 with adaptor protein complex 2 (AP-2).</text>
</comment>
<comment type="subcellular location">
    <subcellularLocation>
        <location evidence="3">Cell membrane</location>
    </subcellularLocation>
    <subcellularLocation>
        <location evidence="2">Membrane</location>
        <location evidence="2">Coated pit</location>
        <topology evidence="2">Peripheral membrane protein</topology>
        <orientation evidence="2">Cytoplasmic side</orientation>
    </subcellularLocation>
    <text evidence="3">AP-2 appears to be excluded from internalizing CCVs and to disengage from sites of endocytosis seconds before internalization of the nascent CCV.</text>
</comment>
<comment type="similarity">
    <text evidence="6">Belongs to the adaptor complexes small subunit family.</text>
</comment>
<evidence type="ECO:0000250" key="1"/>
<evidence type="ECO:0000250" key="2">
    <source>
        <dbReference type="UniProtKB" id="P53680"/>
    </source>
</evidence>
<evidence type="ECO:0000250" key="3">
    <source>
        <dbReference type="UniProtKB" id="P63010"/>
    </source>
</evidence>
<evidence type="ECO:0000269" key="4">
    <source>
    </source>
</evidence>
<evidence type="ECO:0000269" key="5">
    <source>
    </source>
</evidence>
<evidence type="ECO:0000305" key="6"/>
<evidence type="ECO:0007829" key="7">
    <source>
        <dbReference type="PDB" id="4NEE"/>
    </source>
</evidence>
<keyword id="KW-0002">3D-structure</keyword>
<keyword id="KW-1003">Cell membrane</keyword>
<keyword id="KW-0168">Coated pit</keyword>
<keyword id="KW-0254">Endocytosis</keyword>
<keyword id="KW-0472">Membrane</keyword>
<keyword id="KW-0597">Phosphoprotein</keyword>
<keyword id="KW-0653">Protein transport</keyword>
<keyword id="KW-1185">Reference proteome</keyword>
<keyword id="KW-0813">Transport</keyword>
<accession>P62744</accession>
<accession>P70626</accession>
<accession>P97626</accession>
<accession>Q00380</accession>